<reference key="1">
    <citation type="journal article" date="2008" name="Proc. Natl. Acad. Sci. U.S.A.">
        <title>The genome of Cyanothece 51142, a unicellular diazotrophic cyanobacterium important in the marine nitrogen cycle.</title>
        <authorList>
            <person name="Welsh E.A."/>
            <person name="Liberton M."/>
            <person name="Stoeckel J."/>
            <person name="Loh T."/>
            <person name="Elvitigala T."/>
            <person name="Wang C."/>
            <person name="Wollam A."/>
            <person name="Fulton R.S."/>
            <person name="Clifton S.W."/>
            <person name="Jacobs J.M."/>
            <person name="Aurora R."/>
            <person name="Ghosh B.K."/>
            <person name="Sherman L.A."/>
            <person name="Smith R.D."/>
            <person name="Wilson R.K."/>
            <person name="Pakrasi H.B."/>
        </authorList>
    </citation>
    <scope>NUCLEOTIDE SEQUENCE [LARGE SCALE GENOMIC DNA]</scope>
    <source>
        <strain>ATCC 51142 / BH68</strain>
    </source>
</reference>
<dbReference type="EMBL" id="CP000806">
    <property type="protein sequence ID" value="ACB50717.1"/>
    <property type="molecule type" value="Genomic_DNA"/>
</dbReference>
<dbReference type="RefSeq" id="WP_007304785.1">
    <property type="nucleotide sequence ID" value="NC_010546.1"/>
</dbReference>
<dbReference type="SMR" id="B1WWJ3"/>
<dbReference type="STRING" id="43989.cce_1367"/>
<dbReference type="GeneID" id="88769408"/>
<dbReference type="KEGG" id="cyt:cce_1367"/>
<dbReference type="eggNOG" id="COG0230">
    <property type="taxonomic scope" value="Bacteria"/>
</dbReference>
<dbReference type="HOGENOM" id="CLU_129938_2_1_3"/>
<dbReference type="OrthoDB" id="9804164at2"/>
<dbReference type="Proteomes" id="UP000001203">
    <property type="component" value="Chromosome circular"/>
</dbReference>
<dbReference type="GO" id="GO:1990904">
    <property type="term" value="C:ribonucleoprotein complex"/>
    <property type="evidence" value="ECO:0007669"/>
    <property type="project" value="UniProtKB-KW"/>
</dbReference>
<dbReference type="GO" id="GO:0005840">
    <property type="term" value="C:ribosome"/>
    <property type="evidence" value="ECO:0007669"/>
    <property type="project" value="UniProtKB-KW"/>
</dbReference>
<dbReference type="GO" id="GO:0003735">
    <property type="term" value="F:structural constituent of ribosome"/>
    <property type="evidence" value="ECO:0007669"/>
    <property type="project" value="InterPro"/>
</dbReference>
<dbReference type="GO" id="GO:0006412">
    <property type="term" value="P:translation"/>
    <property type="evidence" value="ECO:0007669"/>
    <property type="project" value="UniProtKB-UniRule"/>
</dbReference>
<dbReference type="Gene3D" id="1.10.287.3980">
    <property type="match status" value="1"/>
</dbReference>
<dbReference type="HAMAP" id="MF_00391">
    <property type="entry name" value="Ribosomal_bL34"/>
    <property type="match status" value="1"/>
</dbReference>
<dbReference type="InterPro" id="IPR000271">
    <property type="entry name" value="Ribosomal_bL34"/>
</dbReference>
<dbReference type="NCBIfam" id="TIGR01030">
    <property type="entry name" value="rpmH_bact"/>
    <property type="match status" value="1"/>
</dbReference>
<dbReference type="Pfam" id="PF00468">
    <property type="entry name" value="Ribosomal_L34"/>
    <property type="match status" value="1"/>
</dbReference>
<accession>B1WWJ3</accession>
<protein>
    <recommendedName>
        <fullName evidence="1">Large ribosomal subunit protein bL34</fullName>
    </recommendedName>
    <alternativeName>
        <fullName evidence="3">50S ribosomal protein L34</fullName>
    </alternativeName>
</protein>
<gene>
    <name evidence="1" type="primary">rpmH</name>
    <name evidence="1" type="synonym">rpl34</name>
    <name type="ordered locus">cce_1367</name>
</gene>
<proteinExistence type="inferred from homology"/>
<sequence>MTQRTLGGTNRKQKRTSGFRARMRKSNGRKVIQARRKKGRHRLSV</sequence>
<evidence type="ECO:0000255" key="1">
    <source>
        <dbReference type="HAMAP-Rule" id="MF_00391"/>
    </source>
</evidence>
<evidence type="ECO:0000256" key="2">
    <source>
        <dbReference type="SAM" id="MobiDB-lite"/>
    </source>
</evidence>
<evidence type="ECO:0000305" key="3"/>
<comment type="similarity">
    <text evidence="1">Belongs to the bacterial ribosomal protein bL34 family.</text>
</comment>
<organism>
    <name type="scientific">Crocosphaera subtropica (strain ATCC 51142 / BH68)</name>
    <name type="common">Cyanothece sp. (strain ATCC 51142)</name>
    <dbReference type="NCBI Taxonomy" id="43989"/>
    <lineage>
        <taxon>Bacteria</taxon>
        <taxon>Bacillati</taxon>
        <taxon>Cyanobacteriota</taxon>
        <taxon>Cyanophyceae</taxon>
        <taxon>Oscillatoriophycideae</taxon>
        <taxon>Chroococcales</taxon>
        <taxon>Aphanothecaceae</taxon>
        <taxon>Crocosphaera</taxon>
        <taxon>Crocosphaera subtropica</taxon>
    </lineage>
</organism>
<keyword id="KW-1185">Reference proteome</keyword>
<keyword id="KW-0687">Ribonucleoprotein</keyword>
<keyword id="KW-0689">Ribosomal protein</keyword>
<name>RL34_CROS5</name>
<feature type="chain" id="PRO_1000134438" description="Large ribosomal subunit protein bL34">
    <location>
        <begin position="1"/>
        <end position="45"/>
    </location>
</feature>
<feature type="region of interest" description="Disordered" evidence="2">
    <location>
        <begin position="1"/>
        <end position="45"/>
    </location>
</feature>
<feature type="compositionally biased region" description="Polar residues" evidence="2">
    <location>
        <begin position="1"/>
        <end position="10"/>
    </location>
</feature>
<feature type="compositionally biased region" description="Basic residues" evidence="2">
    <location>
        <begin position="11"/>
        <end position="45"/>
    </location>
</feature>